<keyword id="KW-0238">DNA-binding</keyword>
<keyword id="KW-0678">Repressor</keyword>
<keyword id="KW-0804">Transcription</keyword>
<keyword id="KW-0805">Transcription regulation</keyword>
<feature type="chain" id="PRO_1000066905" description="HTH-type transcriptional regulator HdfR">
    <location>
        <begin position="1"/>
        <end position="293"/>
    </location>
</feature>
<feature type="domain" description="HTH lysR-type" evidence="1">
    <location>
        <begin position="1"/>
        <end position="58"/>
    </location>
</feature>
<feature type="DNA-binding region" description="H-T-H motif" evidence="1">
    <location>
        <begin position="18"/>
        <end position="37"/>
    </location>
</feature>
<accession>A4TRF4</accession>
<dbReference type="EMBL" id="CP000668">
    <property type="protein sequence ID" value="ABP41866.1"/>
    <property type="molecule type" value="Genomic_DNA"/>
</dbReference>
<dbReference type="RefSeq" id="WP_002212020.1">
    <property type="nucleotide sequence ID" value="NZ_CP009715.1"/>
</dbReference>
<dbReference type="SMR" id="A4TRF4"/>
<dbReference type="GeneID" id="57974802"/>
<dbReference type="KEGG" id="ypp:YPDSF_3516"/>
<dbReference type="PATRIC" id="fig|386656.14.peg.804"/>
<dbReference type="GO" id="GO:0003677">
    <property type="term" value="F:DNA binding"/>
    <property type="evidence" value="ECO:0007669"/>
    <property type="project" value="UniProtKB-KW"/>
</dbReference>
<dbReference type="GO" id="GO:0003700">
    <property type="term" value="F:DNA-binding transcription factor activity"/>
    <property type="evidence" value="ECO:0007669"/>
    <property type="project" value="UniProtKB-UniRule"/>
</dbReference>
<dbReference type="GO" id="GO:0045892">
    <property type="term" value="P:negative regulation of DNA-templated transcription"/>
    <property type="evidence" value="ECO:0007669"/>
    <property type="project" value="UniProtKB-UniRule"/>
</dbReference>
<dbReference type="CDD" id="cd05466">
    <property type="entry name" value="PBP2_LTTR_substrate"/>
    <property type="match status" value="1"/>
</dbReference>
<dbReference type="FunFam" id="1.10.10.10:FF:000001">
    <property type="entry name" value="LysR family transcriptional regulator"/>
    <property type="match status" value="1"/>
</dbReference>
<dbReference type="Gene3D" id="3.40.190.10">
    <property type="entry name" value="Periplasmic binding protein-like II"/>
    <property type="match status" value="2"/>
</dbReference>
<dbReference type="Gene3D" id="1.10.10.10">
    <property type="entry name" value="Winged helix-like DNA-binding domain superfamily/Winged helix DNA-binding domain"/>
    <property type="match status" value="1"/>
</dbReference>
<dbReference type="HAMAP" id="MF_01233">
    <property type="entry name" value="HTH_type_HdfR"/>
    <property type="match status" value="1"/>
</dbReference>
<dbReference type="InterPro" id="IPR050176">
    <property type="entry name" value="LTTR"/>
</dbReference>
<dbReference type="InterPro" id="IPR005119">
    <property type="entry name" value="LysR_subst-bd"/>
</dbReference>
<dbReference type="InterPro" id="IPR020890">
    <property type="entry name" value="Tscrpt_reg_HTH_HdfR"/>
</dbReference>
<dbReference type="InterPro" id="IPR000847">
    <property type="entry name" value="Tscrpt_reg_HTH_LysR"/>
</dbReference>
<dbReference type="InterPro" id="IPR036388">
    <property type="entry name" value="WH-like_DNA-bd_sf"/>
</dbReference>
<dbReference type="InterPro" id="IPR036390">
    <property type="entry name" value="WH_DNA-bd_sf"/>
</dbReference>
<dbReference type="NCBIfam" id="NF002946">
    <property type="entry name" value="PRK03601.1"/>
    <property type="match status" value="1"/>
</dbReference>
<dbReference type="PANTHER" id="PTHR30579:SF8">
    <property type="entry name" value="HTH-TYPE TRANSCRIPTIONAL REGULATOR HDFR"/>
    <property type="match status" value="1"/>
</dbReference>
<dbReference type="PANTHER" id="PTHR30579">
    <property type="entry name" value="TRANSCRIPTIONAL REGULATOR"/>
    <property type="match status" value="1"/>
</dbReference>
<dbReference type="Pfam" id="PF00126">
    <property type="entry name" value="HTH_1"/>
    <property type="match status" value="1"/>
</dbReference>
<dbReference type="Pfam" id="PF03466">
    <property type="entry name" value="LysR_substrate"/>
    <property type="match status" value="1"/>
</dbReference>
<dbReference type="PRINTS" id="PR00039">
    <property type="entry name" value="HTHLYSR"/>
</dbReference>
<dbReference type="SUPFAM" id="SSF53850">
    <property type="entry name" value="Periplasmic binding protein-like II"/>
    <property type="match status" value="1"/>
</dbReference>
<dbReference type="SUPFAM" id="SSF46785">
    <property type="entry name" value="Winged helix' DNA-binding domain"/>
    <property type="match status" value="1"/>
</dbReference>
<dbReference type="PROSITE" id="PS50931">
    <property type="entry name" value="HTH_LYSR"/>
    <property type="match status" value="1"/>
</dbReference>
<comment type="function">
    <text evidence="1">Negatively regulates the transcription of the flagellar master operon flhDC by binding to the upstream region of the operon.</text>
</comment>
<comment type="similarity">
    <text evidence="2">Belongs to the LysR transcriptional regulatory family.</text>
</comment>
<proteinExistence type="inferred from homology"/>
<reference key="1">
    <citation type="submission" date="2007-02" db="EMBL/GenBank/DDBJ databases">
        <title>Complete sequence of chromosome of Yersinia pestis Pestoides F.</title>
        <authorList>
            <consortium name="US DOE Joint Genome Institute"/>
            <person name="Copeland A."/>
            <person name="Lucas S."/>
            <person name="Lapidus A."/>
            <person name="Barry K."/>
            <person name="Detter J.C."/>
            <person name="Glavina del Rio T."/>
            <person name="Hammon N."/>
            <person name="Israni S."/>
            <person name="Dalin E."/>
            <person name="Tice H."/>
            <person name="Pitluck S."/>
            <person name="Di Bartolo G."/>
            <person name="Chain P."/>
            <person name="Malfatti S."/>
            <person name="Shin M."/>
            <person name="Vergez L."/>
            <person name="Schmutz J."/>
            <person name="Larimer F."/>
            <person name="Land M."/>
            <person name="Hauser L."/>
            <person name="Worsham P."/>
            <person name="Chu M."/>
            <person name="Bearden S."/>
            <person name="Garcia E."/>
            <person name="Richardson P."/>
        </authorList>
    </citation>
    <scope>NUCLEOTIDE SEQUENCE [LARGE SCALE GENOMIC DNA]</scope>
    <source>
        <strain>Pestoides F</strain>
    </source>
</reference>
<gene>
    <name evidence="1" type="primary">hdfR</name>
    <name type="ordered locus">YPDSF_3516</name>
</gene>
<organism>
    <name type="scientific">Yersinia pestis (strain Pestoides F)</name>
    <dbReference type="NCBI Taxonomy" id="386656"/>
    <lineage>
        <taxon>Bacteria</taxon>
        <taxon>Pseudomonadati</taxon>
        <taxon>Pseudomonadota</taxon>
        <taxon>Gammaproteobacteria</taxon>
        <taxon>Enterobacterales</taxon>
        <taxon>Yersiniaceae</taxon>
        <taxon>Yersinia</taxon>
    </lineage>
</organism>
<name>HDFR_YERPP</name>
<protein>
    <recommendedName>
        <fullName evidence="1">HTH-type transcriptional regulator HdfR</fullName>
    </recommendedName>
    <alternativeName>
        <fullName evidence="1">H-NS-dependent flhDC regulator</fullName>
    </alternativeName>
</protein>
<evidence type="ECO:0000255" key="1">
    <source>
        <dbReference type="HAMAP-Rule" id="MF_01233"/>
    </source>
</evidence>
<evidence type="ECO:0000305" key="2"/>
<sequence>MDTELLKTFLEVSRTRHFGRAAESLYLTQSAVSFRIRQLENQLGANLFTRHRNNIRLTPAGERLVPYAEMLLNTWRLAKKEVIHSLQHTELSIGATASLWEAYLTPWLQQLYEQQEELRLEARIALRNSLVKQLHERQLDLLITTEPPKMDELACLLLGHFSLRLYSSFSLDLPKEDDTPNEHKNASEVPYIKLEWGADFHQQENRLLDSEQAPILTTTSAHLTRQLLETTGGCAFLPEHWQKEYPQLVIHPDIPPIVRPLYAVWLQNSDQQALIRQLLKTPMNNATQSVTRE</sequence>